<protein>
    <recommendedName>
        <fullName evidence="1">Recombination protein RecR</fullName>
    </recommendedName>
</protein>
<accession>Q0VNM7</accession>
<name>RECR_ALCBS</name>
<dbReference type="EMBL" id="AM286690">
    <property type="protein sequence ID" value="CAL17221.1"/>
    <property type="molecule type" value="Genomic_DNA"/>
</dbReference>
<dbReference type="RefSeq" id="WP_011589054.1">
    <property type="nucleotide sequence ID" value="NC_008260.1"/>
</dbReference>
<dbReference type="SMR" id="Q0VNM7"/>
<dbReference type="STRING" id="393595.ABO_1773"/>
<dbReference type="KEGG" id="abo:ABO_1773"/>
<dbReference type="eggNOG" id="COG0353">
    <property type="taxonomic scope" value="Bacteria"/>
</dbReference>
<dbReference type="HOGENOM" id="CLU_060739_1_2_6"/>
<dbReference type="OrthoDB" id="9802672at2"/>
<dbReference type="Proteomes" id="UP000008871">
    <property type="component" value="Chromosome"/>
</dbReference>
<dbReference type="GO" id="GO:0003677">
    <property type="term" value="F:DNA binding"/>
    <property type="evidence" value="ECO:0007669"/>
    <property type="project" value="UniProtKB-UniRule"/>
</dbReference>
<dbReference type="GO" id="GO:0008270">
    <property type="term" value="F:zinc ion binding"/>
    <property type="evidence" value="ECO:0007669"/>
    <property type="project" value="UniProtKB-KW"/>
</dbReference>
<dbReference type="GO" id="GO:0006310">
    <property type="term" value="P:DNA recombination"/>
    <property type="evidence" value="ECO:0007669"/>
    <property type="project" value="UniProtKB-UniRule"/>
</dbReference>
<dbReference type="GO" id="GO:0006281">
    <property type="term" value="P:DNA repair"/>
    <property type="evidence" value="ECO:0007669"/>
    <property type="project" value="UniProtKB-UniRule"/>
</dbReference>
<dbReference type="CDD" id="cd01025">
    <property type="entry name" value="TOPRIM_recR"/>
    <property type="match status" value="1"/>
</dbReference>
<dbReference type="Gene3D" id="3.40.1360.10">
    <property type="match status" value="1"/>
</dbReference>
<dbReference type="Gene3D" id="6.10.250.240">
    <property type="match status" value="1"/>
</dbReference>
<dbReference type="Gene3D" id="1.10.8.420">
    <property type="entry name" value="RecR Domain 1"/>
    <property type="match status" value="1"/>
</dbReference>
<dbReference type="HAMAP" id="MF_00017">
    <property type="entry name" value="RecR"/>
    <property type="match status" value="1"/>
</dbReference>
<dbReference type="InterPro" id="IPR000093">
    <property type="entry name" value="DNA_Rcmb_RecR"/>
</dbReference>
<dbReference type="InterPro" id="IPR023627">
    <property type="entry name" value="Rcmb_RecR"/>
</dbReference>
<dbReference type="InterPro" id="IPR015967">
    <property type="entry name" value="Rcmb_RecR_Znf"/>
</dbReference>
<dbReference type="InterPro" id="IPR006171">
    <property type="entry name" value="TOPRIM_dom"/>
</dbReference>
<dbReference type="InterPro" id="IPR034137">
    <property type="entry name" value="TOPRIM_RecR"/>
</dbReference>
<dbReference type="NCBIfam" id="TIGR00615">
    <property type="entry name" value="recR"/>
    <property type="match status" value="1"/>
</dbReference>
<dbReference type="PANTHER" id="PTHR30446">
    <property type="entry name" value="RECOMBINATION PROTEIN RECR"/>
    <property type="match status" value="1"/>
</dbReference>
<dbReference type="PANTHER" id="PTHR30446:SF0">
    <property type="entry name" value="RECOMBINATION PROTEIN RECR"/>
    <property type="match status" value="1"/>
</dbReference>
<dbReference type="Pfam" id="PF21175">
    <property type="entry name" value="RecR_C"/>
    <property type="match status" value="1"/>
</dbReference>
<dbReference type="Pfam" id="PF21176">
    <property type="entry name" value="RecR_HhH"/>
    <property type="match status" value="1"/>
</dbReference>
<dbReference type="Pfam" id="PF02132">
    <property type="entry name" value="RecR_ZnF"/>
    <property type="match status" value="1"/>
</dbReference>
<dbReference type="Pfam" id="PF13662">
    <property type="entry name" value="Toprim_4"/>
    <property type="match status" value="1"/>
</dbReference>
<dbReference type="SMART" id="SM00493">
    <property type="entry name" value="TOPRIM"/>
    <property type="match status" value="1"/>
</dbReference>
<dbReference type="SUPFAM" id="SSF111304">
    <property type="entry name" value="Recombination protein RecR"/>
    <property type="match status" value="1"/>
</dbReference>
<dbReference type="PROSITE" id="PS01300">
    <property type="entry name" value="RECR"/>
    <property type="match status" value="1"/>
</dbReference>
<dbReference type="PROSITE" id="PS50880">
    <property type="entry name" value="TOPRIM"/>
    <property type="match status" value="1"/>
</dbReference>
<comment type="function">
    <text evidence="1">May play a role in DNA repair. It seems to be involved in an RecBC-independent recombinational process of DNA repair. It may act with RecF and RecO.</text>
</comment>
<comment type="similarity">
    <text evidence="1">Belongs to the RecR family.</text>
</comment>
<evidence type="ECO:0000255" key="1">
    <source>
        <dbReference type="HAMAP-Rule" id="MF_00017"/>
    </source>
</evidence>
<feature type="chain" id="PRO_1000001506" description="Recombination protein RecR">
    <location>
        <begin position="1"/>
        <end position="200"/>
    </location>
</feature>
<feature type="domain" description="Toprim" evidence="1">
    <location>
        <begin position="80"/>
        <end position="175"/>
    </location>
</feature>
<feature type="zinc finger region" description="C4-type" evidence="1">
    <location>
        <begin position="57"/>
        <end position="72"/>
    </location>
</feature>
<reference key="1">
    <citation type="journal article" date="2006" name="Nat. Biotechnol.">
        <title>Genome sequence of the ubiquitous hydrocarbon-degrading marine bacterium Alcanivorax borkumensis.</title>
        <authorList>
            <person name="Schneiker S."/>
            <person name="Martins dos Santos V.A.P."/>
            <person name="Bartels D."/>
            <person name="Bekel T."/>
            <person name="Brecht M."/>
            <person name="Buhrmester J."/>
            <person name="Chernikova T.N."/>
            <person name="Denaro R."/>
            <person name="Ferrer M."/>
            <person name="Gertler C."/>
            <person name="Goesmann A."/>
            <person name="Golyshina O.V."/>
            <person name="Kaminski F."/>
            <person name="Khachane A.N."/>
            <person name="Lang S."/>
            <person name="Linke B."/>
            <person name="McHardy A.C."/>
            <person name="Meyer F."/>
            <person name="Nechitaylo T."/>
            <person name="Puehler A."/>
            <person name="Regenhardt D."/>
            <person name="Rupp O."/>
            <person name="Sabirova J.S."/>
            <person name="Selbitschka W."/>
            <person name="Yakimov M.M."/>
            <person name="Timmis K.N."/>
            <person name="Vorhoelter F.-J."/>
            <person name="Weidner S."/>
            <person name="Kaiser O."/>
            <person name="Golyshin P.N."/>
        </authorList>
    </citation>
    <scope>NUCLEOTIDE SEQUENCE [LARGE SCALE GENOMIC DNA]</scope>
    <source>
        <strain>ATCC 700651 / DSM 11573 / NCIMB 13689 / SK2</strain>
    </source>
</reference>
<proteinExistence type="inferred from homology"/>
<keyword id="KW-0227">DNA damage</keyword>
<keyword id="KW-0233">DNA recombination</keyword>
<keyword id="KW-0234">DNA repair</keyword>
<keyword id="KW-0479">Metal-binding</keyword>
<keyword id="KW-1185">Reference proteome</keyword>
<keyword id="KW-0862">Zinc</keyword>
<keyword id="KW-0863">Zinc-finger</keyword>
<gene>
    <name evidence="1" type="primary">recR</name>
    <name type="ordered locus">ABO_1773</name>
</gene>
<organism>
    <name type="scientific">Alcanivorax borkumensis (strain ATCC 700651 / DSM 11573 / NCIMB 13689 / SK2)</name>
    <dbReference type="NCBI Taxonomy" id="393595"/>
    <lineage>
        <taxon>Bacteria</taxon>
        <taxon>Pseudomonadati</taxon>
        <taxon>Pseudomonadota</taxon>
        <taxon>Gammaproteobacteria</taxon>
        <taxon>Oceanospirillales</taxon>
        <taxon>Alcanivoracaceae</taxon>
        <taxon>Alcanivorax</taxon>
    </lineage>
</organism>
<sequence>MKHAPLVDQLINAFTCLPGVGPRSAQRMAYALLDRGRESGRRLGDALHAAMDGVQHCERCRNYAQSTLCPVCEDPRRDASLVCIVATPGDVLAFEQSGEYRGQYFVLMGELSPLDGIGPRELGLDVLEQRLNEGQISELILATGTTVEGEATAHYVLGLAQDAGVGVSRIAQGVPMGGELEFVDGATLAQALKGRRPFDA</sequence>